<name>TRUA_CUPPJ</name>
<dbReference type="EC" id="5.4.99.12" evidence="1"/>
<dbReference type="EMBL" id="CP000090">
    <property type="protein sequence ID" value="AAZ61670.1"/>
    <property type="molecule type" value="Genomic_DNA"/>
</dbReference>
<dbReference type="SMR" id="Q46YW3"/>
<dbReference type="STRING" id="264198.Reut_A2308"/>
<dbReference type="KEGG" id="reu:Reut_A2308"/>
<dbReference type="eggNOG" id="COG0101">
    <property type="taxonomic scope" value="Bacteria"/>
</dbReference>
<dbReference type="HOGENOM" id="CLU_014673_0_2_4"/>
<dbReference type="OrthoDB" id="9811823at2"/>
<dbReference type="GO" id="GO:0003723">
    <property type="term" value="F:RNA binding"/>
    <property type="evidence" value="ECO:0007669"/>
    <property type="project" value="InterPro"/>
</dbReference>
<dbReference type="GO" id="GO:0160147">
    <property type="term" value="F:tRNA pseudouridine(38-40) synthase activity"/>
    <property type="evidence" value="ECO:0007669"/>
    <property type="project" value="UniProtKB-EC"/>
</dbReference>
<dbReference type="GO" id="GO:0031119">
    <property type="term" value="P:tRNA pseudouridine synthesis"/>
    <property type="evidence" value="ECO:0007669"/>
    <property type="project" value="UniProtKB-UniRule"/>
</dbReference>
<dbReference type="CDD" id="cd02570">
    <property type="entry name" value="PseudoU_synth_EcTruA"/>
    <property type="match status" value="1"/>
</dbReference>
<dbReference type="FunFam" id="3.30.70.580:FF:000001">
    <property type="entry name" value="tRNA pseudouridine synthase A"/>
    <property type="match status" value="1"/>
</dbReference>
<dbReference type="Gene3D" id="3.30.70.660">
    <property type="entry name" value="Pseudouridine synthase I, catalytic domain, C-terminal subdomain"/>
    <property type="match status" value="1"/>
</dbReference>
<dbReference type="Gene3D" id="3.30.70.580">
    <property type="entry name" value="Pseudouridine synthase I, catalytic domain, N-terminal subdomain"/>
    <property type="match status" value="1"/>
</dbReference>
<dbReference type="HAMAP" id="MF_00171">
    <property type="entry name" value="TruA"/>
    <property type="match status" value="1"/>
</dbReference>
<dbReference type="InterPro" id="IPR020103">
    <property type="entry name" value="PsdUridine_synth_cat_dom_sf"/>
</dbReference>
<dbReference type="InterPro" id="IPR001406">
    <property type="entry name" value="PsdUridine_synth_TruA"/>
</dbReference>
<dbReference type="InterPro" id="IPR020097">
    <property type="entry name" value="PsdUridine_synth_TruA_a/b_dom"/>
</dbReference>
<dbReference type="InterPro" id="IPR020095">
    <property type="entry name" value="PsdUridine_synth_TruA_C"/>
</dbReference>
<dbReference type="InterPro" id="IPR020094">
    <property type="entry name" value="TruA/RsuA/RluB/E/F_N"/>
</dbReference>
<dbReference type="NCBIfam" id="TIGR00071">
    <property type="entry name" value="hisT_truA"/>
    <property type="match status" value="1"/>
</dbReference>
<dbReference type="PANTHER" id="PTHR11142">
    <property type="entry name" value="PSEUDOURIDYLATE SYNTHASE"/>
    <property type="match status" value="1"/>
</dbReference>
<dbReference type="PANTHER" id="PTHR11142:SF0">
    <property type="entry name" value="TRNA PSEUDOURIDINE SYNTHASE-LIKE 1"/>
    <property type="match status" value="1"/>
</dbReference>
<dbReference type="Pfam" id="PF01416">
    <property type="entry name" value="PseudoU_synth_1"/>
    <property type="match status" value="2"/>
</dbReference>
<dbReference type="PIRSF" id="PIRSF001430">
    <property type="entry name" value="tRNA_psdUrid_synth"/>
    <property type="match status" value="1"/>
</dbReference>
<dbReference type="SUPFAM" id="SSF55120">
    <property type="entry name" value="Pseudouridine synthase"/>
    <property type="match status" value="1"/>
</dbReference>
<reference key="1">
    <citation type="journal article" date="2010" name="PLoS ONE">
        <title>The complete multipartite genome sequence of Cupriavidus necator JMP134, a versatile pollutant degrader.</title>
        <authorList>
            <person name="Lykidis A."/>
            <person name="Perez-Pantoja D."/>
            <person name="Ledger T."/>
            <person name="Mavromatis K."/>
            <person name="Anderson I.J."/>
            <person name="Ivanova N.N."/>
            <person name="Hooper S.D."/>
            <person name="Lapidus A."/>
            <person name="Lucas S."/>
            <person name="Gonzalez B."/>
            <person name="Kyrpides N.C."/>
        </authorList>
    </citation>
    <scope>NUCLEOTIDE SEQUENCE [LARGE SCALE GENOMIC DNA]</scope>
    <source>
        <strain>JMP134 / LMG 1197</strain>
    </source>
</reference>
<accession>Q46YW3</accession>
<gene>
    <name evidence="1" type="primary">truA</name>
    <name type="ordered locus">Reut_A2308</name>
</gene>
<organism>
    <name type="scientific">Cupriavidus pinatubonensis (strain JMP 134 / LMG 1197)</name>
    <name type="common">Cupriavidus necator (strain JMP 134)</name>
    <dbReference type="NCBI Taxonomy" id="264198"/>
    <lineage>
        <taxon>Bacteria</taxon>
        <taxon>Pseudomonadati</taxon>
        <taxon>Pseudomonadota</taxon>
        <taxon>Betaproteobacteria</taxon>
        <taxon>Burkholderiales</taxon>
        <taxon>Burkholderiaceae</taxon>
        <taxon>Cupriavidus</taxon>
    </lineage>
</organism>
<proteinExistence type="inferred from homology"/>
<evidence type="ECO:0000255" key="1">
    <source>
        <dbReference type="HAMAP-Rule" id="MF_00171"/>
    </source>
</evidence>
<keyword id="KW-0413">Isomerase</keyword>
<keyword id="KW-0819">tRNA processing</keyword>
<comment type="function">
    <text evidence="1">Formation of pseudouridine at positions 38, 39 and 40 in the anticodon stem and loop of transfer RNAs.</text>
</comment>
<comment type="catalytic activity">
    <reaction evidence="1">
        <text>uridine(38/39/40) in tRNA = pseudouridine(38/39/40) in tRNA</text>
        <dbReference type="Rhea" id="RHEA:22376"/>
        <dbReference type="Rhea" id="RHEA-COMP:10085"/>
        <dbReference type="Rhea" id="RHEA-COMP:10087"/>
        <dbReference type="ChEBI" id="CHEBI:65314"/>
        <dbReference type="ChEBI" id="CHEBI:65315"/>
        <dbReference type="EC" id="5.4.99.12"/>
    </reaction>
</comment>
<comment type="subunit">
    <text evidence="1">Homodimer.</text>
</comment>
<comment type="similarity">
    <text evidence="1">Belongs to the tRNA pseudouridine synthase TruA family.</text>
</comment>
<sequence>MNRIAIGLHYDGAAFSGWQSQPHRNTVQDYLEDSIERFAGVRLLTTVAGRTDAGVHALGQVIHLDTTLDRTTFSWVRGINAFLPPSIALQWARPVDESFHARFLAFERMYYYALYTGPHRVPLAHGRAGYLMLPPGQRLDVDAMQAASRCLLGEQDFSSFRAAECQAKSPVKTMYDVTLKADGNWVFLRFRASAFLHHMVRNLMGCLVAVGRGRYPPEWLAEVLAARDRKLAAPTFMPDGLYLADVKYPEAYKIPAADPSASLFHGVFRHDAA</sequence>
<feature type="chain" id="PRO_1000017148" description="tRNA pseudouridine synthase A">
    <location>
        <begin position="1"/>
        <end position="273"/>
    </location>
</feature>
<feature type="active site" description="Nucleophile" evidence="1">
    <location>
        <position position="52"/>
    </location>
</feature>
<feature type="binding site" evidence="1">
    <location>
        <position position="110"/>
    </location>
    <ligand>
        <name>substrate</name>
    </ligand>
</feature>
<protein>
    <recommendedName>
        <fullName evidence="1">tRNA pseudouridine synthase A</fullName>
        <ecNumber evidence="1">5.4.99.12</ecNumber>
    </recommendedName>
    <alternativeName>
        <fullName evidence="1">tRNA pseudouridine(38-40) synthase</fullName>
    </alternativeName>
    <alternativeName>
        <fullName evidence="1">tRNA pseudouridylate synthase I</fullName>
    </alternativeName>
    <alternativeName>
        <fullName evidence="1">tRNA-uridine isomerase I</fullName>
    </alternativeName>
</protein>